<accession>Q9ZJ74</accession>
<gene>
    <name evidence="1" type="primary">fbp</name>
    <name type="ordered locus">jhp_1440</name>
</gene>
<organism>
    <name type="scientific">Helicobacter pylori (strain J99 / ATCC 700824)</name>
    <name type="common">Campylobacter pylori J99</name>
    <dbReference type="NCBI Taxonomy" id="85963"/>
    <lineage>
        <taxon>Bacteria</taxon>
        <taxon>Pseudomonadati</taxon>
        <taxon>Campylobacterota</taxon>
        <taxon>Epsilonproteobacteria</taxon>
        <taxon>Campylobacterales</taxon>
        <taxon>Helicobacteraceae</taxon>
        <taxon>Helicobacter</taxon>
    </lineage>
</organism>
<sequence length="290" mass="32880">MDYKRFKGKHANIVIEIISLLEKGVKKAQEILEKPDAGSYTQLENSSGDTPIKADLALDKFLEETFLSLENVKSVFSEEKETPVTKENGSYLIAYDPLDGSSVMEANFLVGTIIGVYEKDYKAQNLVASLYVVFGHKIELVVALEEVYRYAFYQNKFHFIETIVLENKGKIIASGGNQKDFSLGLKKALEGFFAENYRLRYSGSMVADVHHVLVKKGGMFSYPQKKLRKLFEVFPLALMVEKAKGEAFYFDKGVKKRLLDQSVESYHEKSECYLASPHEAQILEKHLKGE</sequence>
<proteinExistence type="inferred from homology"/>
<protein>
    <recommendedName>
        <fullName evidence="1">Fructose-1,6-bisphosphatase class 1</fullName>
        <shortName evidence="1">FBPase class 1</shortName>
        <ecNumber evidence="1">3.1.3.11</ecNumber>
    </recommendedName>
    <alternativeName>
        <fullName evidence="1">D-fructose-1,6-bisphosphate 1-phosphohydrolase class 1</fullName>
    </alternativeName>
</protein>
<name>F16PA_HELPJ</name>
<comment type="catalytic activity">
    <reaction evidence="1">
        <text>beta-D-fructose 1,6-bisphosphate + H2O = beta-D-fructose 6-phosphate + phosphate</text>
        <dbReference type="Rhea" id="RHEA:11064"/>
        <dbReference type="ChEBI" id="CHEBI:15377"/>
        <dbReference type="ChEBI" id="CHEBI:32966"/>
        <dbReference type="ChEBI" id="CHEBI:43474"/>
        <dbReference type="ChEBI" id="CHEBI:57634"/>
        <dbReference type="EC" id="3.1.3.11"/>
    </reaction>
</comment>
<comment type="cofactor">
    <cofactor evidence="1">
        <name>Mg(2+)</name>
        <dbReference type="ChEBI" id="CHEBI:18420"/>
    </cofactor>
    <text evidence="1">Binds 2 magnesium ions per subunit.</text>
</comment>
<comment type="pathway">
    <text evidence="1">Carbohydrate biosynthesis; gluconeogenesis.</text>
</comment>
<comment type="subunit">
    <text evidence="1">Homotetramer.</text>
</comment>
<comment type="subcellular location">
    <subcellularLocation>
        <location evidence="1">Cytoplasm</location>
    </subcellularLocation>
</comment>
<comment type="similarity">
    <text evidence="1">Belongs to the FBPase class 1 family.</text>
</comment>
<feature type="chain" id="PRO_0000200496" description="Fructose-1,6-bisphosphatase class 1">
    <location>
        <begin position="1"/>
        <end position="290"/>
    </location>
</feature>
<feature type="binding site" evidence="1">
    <location>
        <position position="78"/>
    </location>
    <ligand>
        <name>Mg(2+)</name>
        <dbReference type="ChEBI" id="CHEBI:18420"/>
        <label>1</label>
    </ligand>
</feature>
<feature type="binding site" evidence="1">
    <location>
        <position position="96"/>
    </location>
    <ligand>
        <name>Mg(2+)</name>
        <dbReference type="ChEBI" id="CHEBI:18420"/>
        <label>1</label>
    </ligand>
</feature>
<feature type="binding site" evidence="1">
    <location>
        <position position="96"/>
    </location>
    <ligand>
        <name>Mg(2+)</name>
        <dbReference type="ChEBI" id="CHEBI:18420"/>
        <label>2</label>
    </ligand>
</feature>
<feature type="binding site" evidence="1">
    <location>
        <position position="98"/>
    </location>
    <ligand>
        <name>Mg(2+)</name>
        <dbReference type="ChEBI" id="CHEBI:18420"/>
        <label>1</label>
    </ligand>
</feature>
<feature type="binding site" evidence="1">
    <location>
        <begin position="99"/>
        <end position="102"/>
    </location>
    <ligand>
        <name>substrate</name>
    </ligand>
</feature>
<feature type="binding site" evidence="1">
    <location>
        <position position="99"/>
    </location>
    <ligand>
        <name>Mg(2+)</name>
        <dbReference type="ChEBI" id="CHEBI:18420"/>
        <label>2</label>
    </ligand>
</feature>
<feature type="binding site" evidence="1">
    <location>
        <position position="201"/>
    </location>
    <ligand>
        <name>substrate</name>
    </ligand>
</feature>
<feature type="binding site" evidence="1">
    <location>
        <position position="226"/>
    </location>
    <ligand>
        <name>substrate</name>
    </ligand>
</feature>
<feature type="binding site" evidence="1">
    <location>
        <position position="232"/>
    </location>
    <ligand>
        <name>Mg(2+)</name>
        <dbReference type="ChEBI" id="CHEBI:18420"/>
        <label>2</label>
    </ligand>
</feature>
<keyword id="KW-0119">Carbohydrate metabolism</keyword>
<keyword id="KW-0963">Cytoplasm</keyword>
<keyword id="KW-0378">Hydrolase</keyword>
<keyword id="KW-0460">Magnesium</keyword>
<keyword id="KW-0479">Metal-binding</keyword>
<evidence type="ECO:0000255" key="1">
    <source>
        <dbReference type="HAMAP-Rule" id="MF_01855"/>
    </source>
</evidence>
<reference key="1">
    <citation type="journal article" date="1999" name="Nature">
        <title>Genomic sequence comparison of two unrelated isolates of the human gastric pathogen Helicobacter pylori.</title>
        <authorList>
            <person name="Alm R.A."/>
            <person name="Ling L.-S.L."/>
            <person name="Moir D.T."/>
            <person name="King B.L."/>
            <person name="Brown E.D."/>
            <person name="Doig P.C."/>
            <person name="Smith D.R."/>
            <person name="Noonan B."/>
            <person name="Guild B.C."/>
            <person name="deJonge B.L."/>
            <person name="Carmel G."/>
            <person name="Tummino P.J."/>
            <person name="Caruso A."/>
            <person name="Uria-Nickelsen M."/>
            <person name="Mills D.M."/>
            <person name="Ives C."/>
            <person name="Gibson R."/>
            <person name="Merberg D."/>
            <person name="Mills S.D."/>
            <person name="Jiang Q."/>
            <person name="Taylor D.E."/>
            <person name="Vovis G.F."/>
            <person name="Trust T.J."/>
        </authorList>
    </citation>
    <scope>NUCLEOTIDE SEQUENCE [LARGE SCALE GENOMIC DNA]</scope>
    <source>
        <strain>J99 / ATCC 700824</strain>
    </source>
</reference>
<dbReference type="EC" id="3.1.3.11" evidence="1"/>
<dbReference type="EMBL" id="AE001439">
    <property type="protein sequence ID" value="AAD07014.1"/>
    <property type="molecule type" value="Genomic_DNA"/>
</dbReference>
<dbReference type="PIR" id="H71807">
    <property type="entry name" value="H71807"/>
</dbReference>
<dbReference type="RefSeq" id="WP_000384963.1">
    <property type="nucleotide sequence ID" value="NC_000921.1"/>
</dbReference>
<dbReference type="SMR" id="Q9ZJ74"/>
<dbReference type="KEGG" id="hpj:jhp_1440"/>
<dbReference type="PATRIC" id="fig|85963.30.peg.1104"/>
<dbReference type="eggNOG" id="COG0158">
    <property type="taxonomic scope" value="Bacteria"/>
</dbReference>
<dbReference type="UniPathway" id="UPA00138"/>
<dbReference type="Proteomes" id="UP000000804">
    <property type="component" value="Chromosome"/>
</dbReference>
<dbReference type="GO" id="GO:0005829">
    <property type="term" value="C:cytosol"/>
    <property type="evidence" value="ECO:0007669"/>
    <property type="project" value="TreeGrafter"/>
</dbReference>
<dbReference type="GO" id="GO:0042132">
    <property type="term" value="F:fructose 1,6-bisphosphate 1-phosphatase activity"/>
    <property type="evidence" value="ECO:0007669"/>
    <property type="project" value="UniProtKB-UniRule"/>
</dbReference>
<dbReference type="GO" id="GO:0000287">
    <property type="term" value="F:magnesium ion binding"/>
    <property type="evidence" value="ECO:0007669"/>
    <property type="project" value="UniProtKB-UniRule"/>
</dbReference>
<dbReference type="GO" id="GO:0030388">
    <property type="term" value="P:fructose 1,6-bisphosphate metabolic process"/>
    <property type="evidence" value="ECO:0007669"/>
    <property type="project" value="TreeGrafter"/>
</dbReference>
<dbReference type="GO" id="GO:0006002">
    <property type="term" value="P:fructose 6-phosphate metabolic process"/>
    <property type="evidence" value="ECO:0007669"/>
    <property type="project" value="TreeGrafter"/>
</dbReference>
<dbReference type="GO" id="GO:0006000">
    <property type="term" value="P:fructose metabolic process"/>
    <property type="evidence" value="ECO:0007669"/>
    <property type="project" value="TreeGrafter"/>
</dbReference>
<dbReference type="GO" id="GO:0006094">
    <property type="term" value="P:gluconeogenesis"/>
    <property type="evidence" value="ECO:0007669"/>
    <property type="project" value="UniProtKB-UniRule"/>
</dbReference>
<dbReference type="GO" id="GO:0005986">
    <property type="term" value="P:sucrose biosynthetic process"/>
    <property type="evidence" value="ECO:0007669"/>
    <property type="project" value="TreeGrafter"/>
</dbReference>
<dbReference type="CDD" id="cd00354">
    <property type="entry name" value="FBPase"/>
    <property type="match status" value="1"/>
</dbReference>
<dbReference type="FunFam" id="3.30.540.10:FF:000036">
    <property type="entry name" value="Fructose-1,6-bisphosphatase class 1"/>
    <property type="match status" value="1"/>
</dbReference>
<dbReference type="FunFam" id="3.40.190.80:FF:000028">
    <property type="entry name" value="Fructose-1,6-bisphosphatase class 1"/>
    <property type="match status" value="1"/>
</dbReference>
<dbReference type="Gene3D" id="3.40.190.80">
    <property type="match status" value="1"/>
</dbReference>
<dbReference type="Gene3D" id="3.30.540.10">
    <property type="entry name" value="Fructose-1,6-Bisphosphatase, subunit A, domain 1"/>
    <property type="match status" value="1"/>
</dbReference>
<dbReference type="HAMAP" id="MF_01855">
    <property type="entry name" value="FBPase_class1"/>
    <property type="match status" value="1"/>
</dbReference>
<dbReference type="InterPro" id="IPR044015">
    <property type="entry name" value="FBPase_C_dom"/>
</dbReference>
<dbReference type="InterPro" id="IPR000146">
    <property type="entry name" value="FBPase_class-1"/>
</dbReference>
<dbReference type="InterPro" id="IPR033391">
    <property type="entry name" value="FBPase_N"/>
</dbReference>
<dbReference type="InterPro" id="IPR023079">
    <property type="entry name" value="SBPase"/>
</dbReference>
<dbReference type="NCBIfam" id="NF006781">
    <property type="entry name" value="PRK09293.2-1"/>
    <property type="match status" value="1"/>
</dbReference>
<dbReference type="PANTHER" id="PTHR11556">
    <property type="entry name" value="FRUCTOSE-1,6-BISPHOSPHATASE-RELATED"/>
    <property type="match status" value="1"/>
</dbReference>
<dbReference type="PANTHER" id="PTHR11556:SF35">
    <property type="entry name" value="SEDOHEPTULOSE-1,7-BISPHOSPHATASE, CHLOROPLASTIC"/>
    <property type="match status" value="1"/>
</dbReference>
<dbReference type="Pfam" id="PF00316">
    <property type="entry name" value="FBPase"/>
    <property type="match status" value="1"/>
</dbReference>
<dbReference type="Pfam" id="PF18913">
    <property type="entry name" value="FBPase_C"/>
    <property type="match status" value="1"/>
</dbReference>
<dbReference type="PIRSF" id="PIRSF000904">
    <property type="entry name" value="FBPtase_SBPase"/>
    <property type="match status" value="1"/>
</dbReference>
<dbReference type="PRINTS" id="PR01958">
    <property type="entry name" value="S17BPHPHTASE"/>
</dbReference>
<dbReference type="SUPFAM" id="SSF56655">
    <property type="entry name" value="Carbohydrate phosphatase"/>
    <property type="match status" value="1"/>
</dbReference>